<proteinExistence type="evidence at transcript level"/>
<reference key="1">
    <citation type="journal article" date="2004" name="Genome Res.">
        <title>The status, quality, and expansion of the NIH full-length cDNA project: the Mammalian Gene Collection (MGC).</title>
        <authorList>
            <consortium name="The MGC Project Team"/>
        </authorList>
    </citation>
    <scope>NUCLEOTIDE SEQUENCE [LARGE SCALE MRNA]</scope>
    <source>
        <tissue>Kidney</tissue>
    </source>
</reference>
<organism>
    <name type="scientific">Rattus norvegicus</name>
    <name type="common">Rat</name>
    <dbReference type="NCBI Taxonomy" id="10116"/>
    <lineage>
        <taxon>Eukaryota</taxon>
        <taxon>Metazoa</taxon>
        <taxon>Chordata</taxon>
        <taxon>Craniata</taxon>
        <taxon>Vertebrata</taxon>
        <taxon>Euteleostomi</taxon>
        <taxon>Mammalia</taxon>
        <taxon>Eutheria</taxon>
        <taxon>Euarchontoglires</taxon>
        <taxon>Glires</taxon>
        <taxon>Rodentia</taxon>
        <taxon>Myomorpha</taxon>
        <taxon>Muroidea</taxon>
        <taxon>Muridae</taxon>
        <taxon>Murinae</taxon>
        <taxon>Rattus</taxon>
    </lineage>
</organism>
<keyword id="KW-0007">Acetylation</keyword>
<keyword id="KW-0177">Collagen degradation</keyword>
<keyword id="KW-0224">Dipeptidase</keyword>
<keyword id="KW-0378">Hydrolase</keyword>
<keyword id="KW-0464">Manganese</keyword>
<keyword id="KW-0479">Metal-binding</keyword>
<keyword id="KW-0482">Metalloprotease</keyword>
<keyword id="KW-0597">Phosphoprotein</keyword>
<keyword id="KW-0645">Protease</keyword>
<keyword id="KW-1185">Reference proteome</keyword>
<feature type="initiator methionine" description="Removed" evidence="2">
    <location>
        <position position="1"/>
    </location>
</feature>
<feature type="chain" id="PRO_0000328065" description="Xaa-Pro dipeptidase">
    <location>
        <begin position="2"/>
        <end position="492"/>
    </location>
</feature>
<feature type="binding site" evidence="1">
    <location>
        <position position="255"/>
    </location>
    <ligand>
        <name>a dipeptide</name>
        <dbReference type="ChEBI" id="CHEBI:90799"/>
    </ligand>
</feature>
<feature type="binding site" evidence="1">
    <location>
        <position position="276"/>
    </location>
    <ligand>
        <name>Mn(2+)</name>
        <dbReference type="ChEBI" id="CHEBI:29035"/>
        <label>1</label>
    </ligand>
</feature>
<feature type="binding site" evidence="1">
    <location>
        <position position="287"/>
    </location>
    <ligand>
        <name>a dipeptide</name>
        <dbReference type="ChEBI" id="CHEBI:90799"/>
    </ligand>
</feature>
<feature type="binding site" evidence="1">
    <location>
        <position position="287"/>
    </location>
    <ligand>
        <name>Mn(2+)</name>
        <dbReference type="ChEBI" id="CHEBI:29035"/>
        <label>1</label>
    </ligand>
</feature>
<feature type="binding site" evidence="1">
    <location>
        <position position="287"/>
    </location>
    <ligand>
        <name>Mn(2+)</name>
        <dbReference type="ChEBI" id="CHEBI:29035"/>
        <label>2</label>
    </ligand>
</feature>
<feature type="binding site" evidence="1">
    <location>
        <position position="370"/>
    </location>
    <ligand>
        <name>Mn(2+)</name>
        <dbReference type="ChEBI" id="CHEBI:29035"/>
        <label>2</label>
    </ligand>
</feature>
<feature type="binding site" evidence="1">
    <location>
        <position position="377"/>
    </location>
    <ligand>
        <name>a dipeptide</name>
        <dbReference type="ChEBI" id="CHEBI:90799"/>
    </ligand>
</feature>
<feature type="binding site" evidence="1">
    <location>
        <position position="398"/>
    </location>
    <ligand>
        <name>a dipeptide</name>
        <dbReference type="ChEBI" id="CHEBI:90799"/>
    </ligand>
</feature>
<feature type="binding site" evidence="1">
    <location>
        <position position="412"/>
    </location>
    <ligand>
        <name>Mn(2+)</name>
        <dbReference type="ChEBI" id="CHEBI:29035"/>
        <label>2</label>
    </ligand>
</feature>
<feature type="binding site" evidence="1">
    <location>
        <position position="452"/>
    </location>
    <ligand>
        <name>Mn(2+)</name>
        <dbReference type="ChEBI" id="CHEBI:29035"/>
        <label>1</label>
    </ligand>
</feature>
<feature type="binding site" evidence="1">
    <location>
        <position position="452"/>
    </location>
    <ligand>
        <name>Mn(2+)</name>
        <dbReference type="ChEBI" id="CHEBI:29035"/>
        <label>2</label>
    </ligand>
</feature>
<feature type="modified residue" description="N-acetylalanine" evidence="1 2">
    <location>
        <position position="2"/>
    </location>
</feature>
<feature type="modified residue" description="Phosphoserine" evidence="1">
    <location>
        <position position="167"/>
    </location>
</feature>
<protein>
    <recommendedName>
        <fullName>Xaa-Pro dipeptidase</fullName>
        <shortName>X-Pro dipeptidase</shortName>
        <ecNumber evidence="1">3.4.13.9</ecNumber>
    </recommendedName>
    <alternativeName>
        <fullName>Imidodipeptidase</fullName>
    </alternativeName>
    <alternativeName>
        <fullName>Peptidase D</fullName>
    </alternativeName>
    <alternativeName>
        <fullName>Proline dipeptidase</fullName>
        <shortName>Prolidase</shortName>
    </alternativeName>
</protein>
<accession>Q5I0D7</accession>
<gene>
    <name type="primary">Pepd</name>
</gene>
<sequence length="492" mass="54751">MASTVRPSFSLGNETLKVPLALFALNRQRLCERLRKNGAVQAGSAVVLQGGEEMQRYCTDTSIIFRQESFFHWAFGVIESGCYGVIDVDTGKSTLFVPRLPASYATWMGKIHSKEHFKEKYAVDDVQYADEIASVLTSRNPSVLLTLRGVNTDSGNVCREASFEGISKFTVNNTILHPEIVECRVFKTDMELEVLRYTNRISSEAHREVMKAVKVGMKEYEMESLFQHYCYSKGGMRHTSYTCICCSGENAAVLHYGHAGAPNDRTIKDGDICLFDMGGEYYCFASDITCSFPANGKFTDDQKAIYEAVLRSCRTVMSTMKPGVWWPDMHRLADRIHLEELTRIGLLSGSVDAMLQVHLGAVFMPHGLGHFLGLDVHDVGGYPEGVERIDEPGLRSLRTARHLEPGMVLTVEPGIYFIDHLLDQALADPAQACFFNQEVLQRFRNFGGVRIEEDVVVTDSGMELLTCVPRTVEEIEACMAGCDKALAPSGPK</sequence>
<name>PEPD_RAT</name>
<dbReference type="EC" id="3.4.13.9" evidence="1"/>
<dbReference type="EMBL" id="BC088440">
    <property type="protein sequence ID" value="AAH88440.1"/>
    <property type="molecule type" value="mRNA"/>
</dbReference>
<dbReference type="RefSeq" id="NP_001009641.1">
    <property type="nucleotide sequence ID" value="NM_001009641.2"/>
</dbReference>
<dbReference type="SMR" id="Q5I0D7"/>
<dbReference type="FunCoup" id="Q5I0D7">
    <property type="interactions" value="1752"/>
</dbReference>
<dbReference type="MEROPS" id="M24.007"/>
<dbReference type="iPTMnet" id="Q5I0D7"/>
<dbReference type="PhosphoSitePlus" id="Q5I0D7"/>
<dbReference type="jPOST" id="Q5I0D7"/>
<dbReference type="PaxDb" id="10116-ENSRNOP00000028701"/>
<dbReference type="Ensembl" id="ENSRNOT00000077404.2">
    <property type="protein sequence ID" value="ENSRNOP00000095277.1"/>
    <property type="gene ID" value="ENSRNOG00000052945.2"/>
</dbReference>
<dbReference type="GeneID" id="292808"/>
<dbReference type="KEGG" id="rno:292808"/>
<dbReference type="UCSC" id="RGD:1594571">
    <property type="organism name" value="rat"/>
</dbReference>
<dbReference type="AGR" id="RGD:1594571"/>
<dbReference type="CTD" id="5184"/>
<dbReference type="RGD" id="1594571">
    <property type="gene designation" value="Pepd"/>
</dbReference>
<dbReference type="eggNOG" id="KOG2737">
    <property type="taxonomic scope" value="Eukaryota"/>
</dbReference>
<dbReference type="GeneTree" id="ENSGT00940000153657"/>
<dbReference type="InParanoid" id="Q5I0D7"/>
<dbReference type="OrthoDB" id="14287at9989"/>
<dbReference type="PhylomeDB" id="Q5I0D7"/>
<dbReference type="PRO" id="PR:Q5I0D7"/>
<dbReference type="Proteomes" id="UP000002494">
    <property type="component" value="Chromosome 1"/>
</dbReference>
<dbReference type="GO" id="GO:0030145">
    <property type="term" value="F:manganese ion binding"/>
    <property type="evidence" value="ECO:0007669"/>
    <property type="project" value="InterPro"/>
</dbReference>
<dbReference type="GO" id="GO:0070006">
    <property type="term" value="F:metalloaminopeptidase activity"/>
    <property type="evidence" value="ECO:0007669"/>
    <property type="project" value="InterPro"/>
</dbReference>
<dbReference type="GO" id="GO:0008233">
    <property type="term" value="F:peptidase activity"/>
    <property type="evidence" value="ECO:0000266"/>
    <property type="project" value="RGD"/>
</dbReference>
<dbReference type="GO" id="GO:0102009">
    <property type="term" value="F:proline dipeptidase activity"/>
    <property type="evidence" value="ECO:0000250"/>
    <property type="project" value="UniProtKB"/>
</dbReference>
<dbReference type="GO" id="GO:0030574">
    <property type="term" value="P:collagen catabolic process"/>
    <property type="evidence" value="ECO:0007669"/>
    <property type="project" value="UniProtKB-KW"/>
</dbReference>
<dbReference type="GO" id="GO:0043069">
    <property type="term" value="P:negative regulation of programmed cell death"/>
    <property type="evidence" value="ECO:0000250"/>
    <property type="project" value="UniProtKB"/>
</dbReference>
<dbReference type="GO" id="GO:0006508">
    <property type="term" value="P:proteolysis"/>
    <property type="evidence" value="ECO:0000250"/>
    <property type="project" value="UniProtKB"/>
</dbReference>
<dbReference type="CDD" id="cd01087">
    <property type="entry name" value="Prolidase"/>
    <property type="match status" value="1"/>
</dbReference>
<dbReference type="FunFam" id="3.90.230.10:FF:000002">
    <property type="entry name" value="Xaa-Pro aminopeptidase 3"/>
    <property type="match status" value="1"/>
</dbReference>
<dbReference type="FunFam" id="3.40.350.10:FF:000007">
    <property type="entry name" value="Xaa-Pro dipeptidase"/>
    <property type="match status" value="1"/>
</dbReference>
<dbReference type="Gene3D" id="3.90.230.10">
    <property type="entry name" value="Creatinase/methionine aminopeptidase superfamily"/>
    <property type="match status" value="1"/>
</dbReference>
<dbReference type="Gene3D" id="3.40.350.10">
    <property type="entry name" value="Creatinase/prolidase N-terminal domain"/>
    <property type="match status" value="1"/>
</dbReference>
<dbReference type="InterPro" id="IPR007865">
    <property type="entry name" value="Aminopep_P_N"/>
</dbReference>
<dbReference type="InterPro" id="IPR029149">
    <property type="entry name" value="Creatin/AminoP/Spt16_N"/>
</dbReference>
<dbReference type="InterPro" id="IPR036005">
    <property type="entry name" value="Creatinase/aminopeptidase-like"/>
</dbReference>
<dbReference type="InterPro" id="IPR000994">
    <property type="entry name" value="Pept_M24"/>
</dbReference>
<dbReference type="InterPro" id="IPR001131">
    <property type="entry name" value="Peptidase_M24B_aminopep-P_CS"/>
</dbReference>
<dbReference type="InterPro" id="IPR052433">
    <property type="entry name" value="X-Pro_dipept-like"/>
</dbReference>
<dbReference type="PANTHER" id="PTHR48480">
    <property type="match status" value="1"/>
</dbReference>
<dbReference type="PANTHER" id="PTHR48480:SF2">
    <property type="entry name" value="PEPTIDASE D"/>
    <property type="match status" value="1"/>
</dbReference>
<dbReference type="Pfam" id="PF05195">
    <property type="entry name" value="AMP_N"/>
    <property type="match status" value="1"/>
</dbReference>
<dbReference type="Pfam" id="PF00557">
    <property type="entry name" value="Peptidase_M24"/>
    <property type="match status" value="1"/>
</dbReference>
<dbReference type="SMART" id="SM01011">
    <property type="entry name" value="AMP_N"/>
    <property type="match status" value="1"/>
</dbReference>
<dbReference type="SUPFAM" id="SSF55920">
    <property type="entry name" value="Creatinase/aminopeptidase"/>
    <property type="match status" value="1"/>
</dbReference>
<dbReference type="SUPFAM" id="SSF53092">
    <property type="entry name" value="Creatinase/prolidase N-terminal domain"/>
    <property type="match status" value="1"/>
</dbReference>
<dbReference type="PROSITE" id="PS00491">
    <property type="entry name" value="PROLINE_PEPTIDASE"/>
    <property type="match status" value="1"/>
</dbReference>
<comment type="function">
    <text evidence="1">Dipeptidase that catalyzes the hydrolysis of dipeptides with a prolyl (Xaa-Pro) or hydroxyprolyl residue in the C-terminal position. The preferred dipeptide substrate is Gly-Pro, but other Xaa-Pro dipeptides, such as Ala-Pro, Met-Pro, Phe-Pro, Val-Pro and Leu-Pro, can be cleaved. Plays an important role in collagen metabolism because the high level of iminoacids in collagen.</text>
</comment>
<comment type="catalytic activity">
    <reaction evidence="1">
        <text>Xaa-L-Pro dipeptide + H2O = an L-alpha-amino acid + L-proline</text>
        <dbReference type="Rhea" id="RHEA:76407"/>
        <dbReference type="ChEBI" id="CHEBI:15377"/>
        <dbReference type="ChEBI" id="CHEBI:59869"/>
        <dbReference type="ChEBI" id="CHEBI:60039"/>
        <dbReference type="ChEBI" id="CHEBI:195196"/>
        <dbReference type="EC" id="3.4.13.9"/>
    </reaction>
</comment>
<comment type="cofactor">
    <cofactor evidence="1">
        <name>Mn(2+)</name>
        <dbReference type="ChEBI" id="CHEBI:29035"/>
    </cofactor>
    <text evidence="1">Binds 2 manganese ions per subunit.</text>
</comment>
<comment type="subunit">
    <text evidence="1">Homodimer.</text>
</comment>
<comment type="similarity">
    <text evidence="3">Belongs to the peptidase M24B family. Eukaryotic-type prolidase subfamily.</text>
</comment>
<evidence type="ECO:0000250" key="1">
    <source>
        <dbReference type="UniProtKB" id="P12955"/>
    </source>
</evidence>
<evidence type="ECO:0000255" key="2"/>
<evidence type="ECO:0000305" key="3"/>